<protein>
    <recommendedName>
        <fullName evidence="1">Small ribosomal subunit protein uS9</fullName>
    </recommendedName>
    <alternativeName>
        <fullName evidence="3">30S ribosomal protein S9</fullName>
    </alternativeName>
</protein>
<sequence length="136" mass="15327">MTMTVIPQNSPIQATGRRKTATATVILKPGKGEVSINGKDLEFYFPTFVHRYEVFKPLEVIEGTKKFDIIAKARGGGLMGQAQALKLAVSRALIKYDPSYRSLLKKEGLLTRDPRMKERKKTGQPGARKRFQFSKR</sequence>
<proteinExistence type="inferred from homology"/>
<gene>
    <name evidence="1" type="primary">rpsI</name>
    <name type="ordered locus">Minf_2364</name>
</gene>
<evidence type="ECO:0000255" key="1">
    <source>
        <dbReference type="HAMAP-Rule" id="MF_00532"/>
    </source>
</evidence>
<evidence type="ECO:0000256" key="2">
    <source>
        <dbReference type="SAM" id="MobiDB-lite"/>
    </source>
</evidence>
<evidence type="ECO:0000305" key="3"/>
<name>RS9_METI4</name>
<feature type="chain" id="PRO_1000128138" description="Small ribosomal subunit protein uS9">
    <location>
        <begin position="1"/>
        <end position="136"/>
    </location>
</feature>
<feature type="region of interest" description="Disordered" evidence="2">
    <location>
        <begin position="111"/>
        <end position="136"/>
    </location>
</feature>
<feature type="compositionally biased region" description="Basic residues" evidence="2">
    <location>
        <begin position="117"/>
        <end position="136"/>
    </location>
</feature>
<accession>B3E0U1</accession>
<reference key="1">
    <citation type="journal article" date="2008" name="Biol. Direct">
        <title>Complete genome sequence of the extremely acidophilic methanotroph isolate V4, Methylacidiphilum infernorum, a representative of the bacterial phylum Verrucomicrobia.</title>
        <authorList>
            <person name="Hou S."/>
            <person name="Makarova K.S."/>
            <person name="Saw J.H."/>
            <person name="Senin P."/>
            <person name="Ly B.V."/>
            <person name="Zhou Z."/>
            <person name="Ren Y."/>
            <person name="Wang J."/>
            <person name="Galperin M.Y."/>
            <person name="Omelchenko M.V."/>
            <person name="Wolf Y.I."/>
            <person name="Yutin N."/>
            <person name="Koonin E.V."/>
            <person name="Stott M.B."/>
            <person name="Mountain B.W."/>
            <person name="Crowe M.A."/>
            <person name="Smirnova A.V."/>
            <person name="Dunfield P.F."/>
            <person name="Feng L."/>
            <person name="Wang L."/>
            <person name="Alam M."/>
        </authorList>
    </citation>
    <scope>NUCLEOTIDE SEQUENCE [LARGE SCALE GENOMIC DNA]</scope>
    <source>
        <strain>Isolate V4</strain>
    </source>
</reference>
<comment type="similarity">
    <text evidence="1">Belongs to the universal ribosomal protein uS9 family.</text>
</comment>
<keyword id="KW-0687">Ribonucleoprotein</keyword>
<keyword id="KW-0689">Ribosomal protein</keyword>
<dbReference type="EMBL" id="CP000975">
    <property type="protein sequence ID" value="ACD84418.1"/>
    <property type="molecule type" value="Genomic_DNA"/>
</dbReference>
<dbReference type="RefSeq" id="WP_012464698.1">
    <property type="nucleotide sequence ID" value="NC_010794.1"/>
</dbReference>
<dbReference type="SMR" id="B3E0U1"/>
<dbReference type="STRING" id="481448.Minf_2364"/>
<dbReference type="KEGG" id="min:Minf_2364"/>
<dbReference type="eggNOG" id="COG0103">
    <property type="taxonomic scope" value="Bacteria"/>
</dbReference>
<dbReference type="HOGENOM" id="CLU_046483_2_1_0"/>
<dbReference type="OrthoDB" id="9803965at2"/>
<dbReference type="Proteomes" id="UP000009149">
    <property type="component" value="Chromosome"/>
</dbReference>
<dbReference type="GO" id="GO:0005737">
    <property type="term" value="C:cytoplasm"/>
    <property type="evidence" value="ECO:0007669"/>
    <property type="project" value="UniProtKB-ARBA"/>
</dbReference>
<dbReference type="GO" id="GO:0015935">
    <property type="term" value="C:small ribosomal subunit"/>
    <property type="evidence" value="ECO:0007669"/>
    <property type="project" value="TreeGrafter"/>
</dbReference>
<dbReference type="GO" id="GO:0003723">
    <property type="term" value="F:RNA binding"/>
    <property type="evidence" value="ECO:0007669"/>
    <property type="project" value="TreeGrafter"/>
</dbReference>
<dbReference type="GO" id="GO:0003735">
    <property type="term" value="F:structural constituent of ribosome"/>
    <property type="evidence" value="ECO:0007669"/>
    <property type="project" value="InterPro"/>
</dbReference>
<dbReference type="GO" id="GO:0006412">
    <property type="term" value="P:translation"/>
    <property type="evidence" value="ECO:0007669"/>
    <property type="project" value="UniProtKB-UniRule"/>
</dbReference>
<dbReference type="FunFam" id="3.30.230.10:FF:000001">
    <property type="entry name" value="30S ribosomal protein S9"/>
    <property type="match status" value="1"/>
</dbReference>
<dbReference type="Gene3D" id="3.30.230.10">
    <property type="match status" value="1"/>
</dbReference>
<dbReference type="HAMAP" id="MF_00532_B">
    <property type="entry name" value="Ribosomal_uS9_B"/>
    <property type="match status" value="1"/>
</dbReference>
<dbReference type="InterPro" id="IPR020568">
    <property type="entry name" value="Ribosomal_Su5_D2-typ_SF"/>
</dbReference>
<dbReference type="InterPro" id="IPR000754">
    <property type="entry name" value="Ribosomal_uS9"/>
</dbReference>
<dbReference type="InterPro" id="IPR023035">
    <property type="entry name" value="Ribosomal_uS9_bac/plastid"/>
</dbReference>
<dbReference type="InterPro" id="IPR020574">
    <property type="entry name" value="Ribosomal_uS9_CS"/>
</dbReference>
<dbReference type="InterPro" id="IPR014721">
    <property type="entry name" value="Ribsml_uS5_D2-typ_fold_subgr"/>
</dbReference>
<dbReference type="NCBIfam" id="NF001099">
    <property type="entry name" value="PRK00132.1"/>
    <property type="match status" value="1"/>
</dbReference>
<dbReference type="PANTHER" id="PTHR21569">
    <property type="entry name" value="RIBOSOMAL PROTEIN S9"/>
    <property type="match status" value="1"/>
</dbReference>
<dbReference type="PANTHER" id="PTHR21569:SF1">
    <property type="entry name" value="SMALL RIBOSOMAL SUBUNIT PROTEIN US9M"/>
    <property type="match status" value="1"/>
</dbReference>
<dbReference type="Pfam" id="PF00380">
    <property type="entry name" value="Ribosomal_S9"/>
    <property type="match status" value="1"/>
</dbReference>
<dbReference type="SUPFAM" id="SSF54211">
    <property type="entry name" value="Ribosomal protein S5 domain 2-like"/>
    <property type="match status" value="1"/>
</dbReference>
<dbReference type="PROSITE" id="PS00360">
    <property type="entry name" value="RIBOSOMAL_S9"/>
    <property type="match status" value="1"/>
</dbReference>
<organism>
    <name type="scientific">Methylacidiphilum infernorum (isolate V4)</name>
    <name type="common">Methylokorus infernorum (strain V4)</name>
    <dbReference type="NCBI Taxonomy" id="481448"/>
    <lineage>
        <taxon>Bacteria</taxon>
        <taxon>Pseudomonadati</taxon>
        <taxon>Verrucomicrobiota</taxon>
        <taxon>Methylacidiphilae</taxon>
        <taxon>Methylacidiphilales</taxon>
        <taxon>Methylacidiphilaceae</taxon>
        <taxon>Methylacidiphilum (ex Ratnadevi et al. 2023)</taxon>
    </lineage>
</organism>